<organism>
    <name type="scientific">Salmonella schwarzengrund (strain CVM19633)</name>
    <dbReference type="NCBI Taxonomy" id="439843"/>
    <lineage>
        <taxon>Bacteria</taxon>
        <taxon>Pseudomonadati</taxon>
        <taxon>Pseudomonadota</taxon>
        <taxon>Gammaproteobacteria</taxon>
        <taxon>Enterobacterales</taxon>
        <taxon>Enterobacteriaceae</taxon>
        <taxon>Salmonella</taxon>
    </lineage>
</organism>
<gene>
    <name evidence="1" type="primary">ruvC</name>
    <name type="ordered locus">SeSA_A2052</name>
</gene>
<protein>
    <recommendedName>
        <fullName evidence="1">Crossover junction endodeoxyribonuclease RuvC</fullName>
        <ecNumber evidence="1">3.1.21.10</ecNumber>
    </recommendedName>
    <alternativeName>
        <fullName evidence="1">Holliday junction nuclease RuvC</fullName>
    </alternativeName>
    <alternativeName>
        <fullName evidence="1">Holliday junction resolvase RuvC</fullName>
    </alternativeName>
</protein>
<proteinExistence type="inferred from homology"/>
<evidence type="ECO:0000255" key="1">
    <source>
        <dbReference type="HAMAP-Rule" id="MF_00034"/>
    </source>
</evidence>
<feature type="chain" id="PRO_1000090562" description="Crossover junction endodeoxyribonuclease RuvC">
    <location>
        <begin position="1"/>
        <end position="173"/>
    </location>
</feature>
<feature type="active site" evidence="1">
    <location>
        <position position="8"/>
    </location>
</feature>
<feature type="active site" evidence="1">
    <location>
        <position position="67"/>
    </location>
</feature>
<feature type="active site" evidence="1">
    <location>
        <position position="139"/>
    </location>
</feature>
<feature type="binding site" evidence="1">
    <location>
        <position position="8"/>
    </location>
    <ligand>
        <name>Mg(2+)</name>
        <dbReference type="ChEBI" id="CHEBI:18420"/>
        <label>1</label>
    </ligand>
</feature>
<feature type="binding site" evidence="1">
    <location>
        <position position="67"/>
    </location>
    <ligand>
        <name>Mg(2+)</name>
        <dbReference type="ChEBI" id="CHEBI:18420"/>
        <label>2</label>
    </ligand>
</feature>
<feature type="binding site" evidence="1">
    <location>
        <position position="139"/>
    </location>
    <ligand>
        <name>Mg(2+)</name>
        <dbReference type="ChEBI" id="CHEBI:18420"/>
        <label>1</label>
    </ligand>
</feature>
<comment type="function">
    <text evidence="1">The RuvA-RuvB-RuvC complex processes Holliday junction (HJ) DNA during genetic recombination and DNA repair. Endonuclease that resolves HJ intermediates. Cleaves cruciform DNA by making single-stranded nicks across the HJ at symmetrical positions within the homologous arms, yielding a 5'-phosphate and a 3'-hydroxyl group; requires a central core of homology in the junction. The consensus cleavage sequence is 5'-(A/T)TT(C/G)-3'. Cleavage occurs on the 3'-side of the TT dinucleotide at the point of strand exchange. HJ branch migration catalyzed by RuvA-RuvB allows RuvC to scan DNA until it finds its consensus sequence, where it cleaves and resolves the cruciform DNA.</text>
</comment>
<comment type="catalytic activity">
    <reaction evidence="1">
        <text>Endonucleolytic cleavage at a junction such as a reciprocal single-stranded crossover between two homologous DNA duplexes (Holliday junction).</text>
        <dbReference type="EC" id="3.1.21.10"/>
    </reaction>
</comment>
<comment type="cofactor">
    <cofactor evidence="1">
        <name>Mg(2+)</name>
        <dbReference type="ChEBI" id="CHEBI:18420"/>
    </cofactor>
    <text evidence="1">Binds 2 Mg(2+) ion per subunit.</text>
</comment>
<comment type="subunit">
    <text evidence="1">Homodimer which binds Holliday junction (HJ) DNA. The HJ becomes 2-fold symmetrical on binding to RuvC with unstacked arms; it has a different conformation from HJ DNA in complex with RuvA. In the full resolvosome a probable DNA-RuvA(4)-RuvB(12)-RuvC(2) complex forms which resolves the HJ.</text>
</comment>
<comment type="subcellular location">
    <subcellularLocation>
        <location evidence="1">Cytoplasm</location>
    </subcellularLocation>
</comment>
<comment type="similarity">
    <text evidence="1">Belongs to the RuvC family.</text>
</comment>
<reference key="1">
    <citation type="journal article" date="2011" name="J. Bacteriol.">
        <title>Comparative genomics of 28 Salmonella enterica isolates: evidence for CRISPR-mediated adaptive sublineage evolution.</title>
        <authorList>
            <person name="Fricke W.F."/>
            <person name="Mammel M.K."/>
            <person name="McDermott P.F."/>
            <person name="Tartera C."/>
            <person name="White D.G."/>
            <person name="Leclerc J.E."/>
            <person name="Ravel J."/>
            <person name="Cebula T.A."/>
        </authorList>
    </citation>
    <scope>NUCLEOTIDE SEQUENCE [LARGE SCALE GENOMIC DNA]</scope>
    <source>
        <strain>CVM19633</strain>
    </source>
</reference>
<keyword id="KW-0963">Cytoplasm</keyword>
<keyword id="KW-0227">DNA damage</keyword>
<keyword id="KW-0233">DNA recombination</keyword>
<keyword id="KW-0234">DNA repair</keyword>
<keyword id="KW-0238">DNA-binding</keyword>
<keyword id="KW-0255">Endonuclease</keyword>
<keyword id="KW-0378">Hydrolase</keyword>
<keyword id="KW-0460">Magnesium</keyword>
<keyword id="KW-0479">Metal-binding</keyword>
<keyword id="KW-0540">Nuclease</keyword>
<sequence length="173" mass="18791">MSIILGIDPGSRITGYGVIRQVGRQLTYLGSGCIRTKVDDLPSRLKLIYAGVTEIITQFQPDYFAIEQVFMAKNADSALKLGQARGVAIVAAVNQELPVFEYAARQVKQTVVGIGSAEKSQVQHMVRTLLKLPANPQADAADALAIAITHCHVSQNAMQMSESRLNLARGRLR</sequence>
<dbReference type="EC" id="3.1.21.10" evidence="1"/>
<dbReference type="EMBL" id="CP001127">
    <property type="protein sequence ID" value="ACF91612.1"/>
    <property type="molecule type" value="Genomic_DNA"/>
</dbReference>
<dbReference type="RefSeq" id="WP_000022509.1">
    <property type="nucleotide sequence ID" value="NC_011094.1"/>
</dbReference>
<dbReference type="SMR" id="B4TYS1"/>
<dbReference type="GeneID" id="93033412"/>
<dbReference type="KEGG" id="sew:SeSA_A2052"/>
<dbReference type="HOGENOM" id="CLU_091257_2_1_6"/>
<dbReference type="Proteomes" id="UP000001865">
    <property type="component" value="Chromosome"/>
</dbReference>
<dbReference type="GO" id="GO:0005737">
    <property type="term" value="C:cytoplasm"/>
    <property type="evidence" value="ECO:0007669"/>
    <property type="project" value="UniProtKB-SubCell"/>
</dbReference>
<dbReference type="GO" id="GO:0048476">
    <property type="term" value="C:Holliday junction resolvase complex"/>
    <property type="evidence" value="ECO:0007669"/>
    <property type="project" value="UniProtKB-UniRule"/>
</dbReference>
<dbReference type="GO" id="GO:0008821">
    <property type="term" value="F:crossover junction DNA endonuclease activity"/>
    <property type="evidence" value="ECO:0007669"/>
    <property type="project" value="UniProtKB-UniRule"/>
</dbReference>
<dbReference type="GO" id="GO:0003677">
    <property type="term" value="F:DNA binding"/>
    <property type="evidence" value="ECO:0007669"/>
    <property type="project" value="UniProtKB-KW"/>
</dbReference>
<dbReference type="GO" id="GO:0000287">
    <property type="term" value="F:magnesium ion binding"/>
    <property type="evidence" value="ECO:0007669"/>
    <property type="project" value="UniProtKB-UniRule"/>
</dbReference>
<dbReference type="GO" id="GO:0006310">
    <property type="term" value="P:DNA recombination"/>
    <property type="evidence" value="ECO:0007669"/>
    <property type="project" value="UniProtKB-UniRule"/>
</dbReference>
<dbReference type="GO" id="GO:0006281">
    <property type="term" value="P:DNA repair"/>
    <property type="evidence" value="ECO:0007669"/>
    <property type="project" value="UniProtKB-UniRule"/>
</dbReference>
<dbReference type="CDD" id="cd16962">
    <property type="entry name" value="RuvC"/>
    <property type="match status" value="1"/>
</dbReference>
<dbReference type="FunFam" id="3.30.420.10:FF:000002">
    <property type="entry name" value="Crossover junction endodeoxyribonuclease RuvC"/>
    <property type="match status" value="1"/>
</dbReference>
<dbReference type="Gene3D" id="3.30.420.10">
    <property type="entry name" value="Ribonuclease H-like superfamily/Ribonuclease H"/>
    <property type="match status" value="1"/>
</dbReference>
<dbReference type="HAMAP" id="MF_00034">
    <property type="entry name" value="RuvC"/>
    <property type="match status" value="1"/>
</dbReference>
<dbReference type="InterPro" id="IPR012337">
    <property type="entry name" value="RNaseH-like_sf"/>
</dbReference>
<dbReference type="InterPro" id="IPR036397">
    <property type="entry name" value="RNaseH_sf"/>
</dbReference>
<dbReference type="InterPro" id="IPR020563">
    <property type="entry name" value="X-over_junc_endoDNase_Mg_BS"/>
</dbReference>
<dbReference type="InterPro" id="IPR002176">
    <property type="entry name" value="X-over_junc_endoDNase_RuvC"/>
</dbReference>
<dbReference type="NCBIfam" id="NF000711">
    <property type="entry name" value="PRK00039.2-1"/>
    <property type="match status" value="1"/>
</dbReference>
<dbReference type="NCBIfam" id="TIGR00228">
    <property type="entry name" value="ruvC"/>
    <property type="match status" value="1"/>
</dbReference>
<dbReference type="PANTHER" id="PTHR30194">
    <property type="entry name" value="CROSSOVER JUNCTION ENDODEOXYRIBONUCLEASE RUVC"/>
    <property type="match status" value="1"/>
</dbReference>
<dbReference type="PANTHER" id="PTHR30194:SF3">
    <property type="entry name" value="CROSSOVER JUNCTION ENDODEOXYRIBONUCLEASE RUVC"/>
    <property type="match status" value="1"/>
</dbReference>
<dbReference type="Pfam" id="PF02075">
    <property type="entry name" value="RuvC"/>
    <property type="match status" value="1"/>
</dbReference>
<dbReference type="PRINTS" id="PR00696">
    <property type="entry name" value="RSOLVASERUVC"/>
</dbReference>
<dbReference type="SUPFAM" id="SSF53098">
    <property type="entry name" value="Ribonuclease H-like"/>
    <property type="match status" value="1"/>
</dbReference>
<dbReference type="PROSITE" id="PS01321">
    <property type="entry name" value="RUVC"/>
    <property type="match status" value="1"/>
</dbReference>
<name>RUVC_SALSV</name>
<accession>B4TYS1</accession>